<reference key="1">
    <citation type="journal article" date="2006" name="Nature">
        <title>DNA sequence and analysis of human chromosome 8.</title>
        <authorList>
            <person name="Nusbaum C."/>
            <person name="Mikkelsen T.S."/>
            <person name="Zody M.C."/>
            <person name="Asakawa S."/>
            <person name="Taudien S."/>
            <person name="Garber M."/>
            <person name="Kodira C.D."/>
            <person name="Schueler M.G."/>
            <person name="Shimizu A."/>
            <person name="Whittaker C.A."/>
            <person name="Chang J.L."/>
            <person name="Cuomo C.A."/>
            <person name="Dewar K."/>
            <person name="FitzGerald M.G."/>
            <person name="Yang X."/>
            <person name="Allen N.R."/>
            <person name="Anderson S."/>
            <person name="Asakawa T."/>
            <person name="Blechschmidt K."/>
            <person name="Bloom T."/>
            <person name="Borowsky M.L."/>
            <person name="Butler J."/>
            <person name="Cook A."/>
            <person name="Corum B."/>
            <person name="DeArellano K."/>
            <person name="DeCaprio D."/>
            <person name="Dooley K.T."/>
            <person name="Dorris L. III"/>
            <person name="Engels R."/>
            <person name="Gloeckner G."/>
            <person name="Hafez N."/>
            <person name="Hagopian D.S."/>
            <person name="Hall J.L."/>
            <person name="Ishikawa S.K."/>
            <person name="Jaffe D.B."/>
            <person name="Kamat A."/>
            <person name="Kudoh J."/>
            <person name="Lehmann R."/>
            <person name="Lokitsang T."/>
            <person name="Macdonald P."/>
            <person name="Major J.E."/>
            <person name="Matthews C.D."/>
            <person name="Mauceli E."/>
            <person name="Menzel U."/>
            <person name="Mihalev A.H."/>
            <person name="Minoshima S."/>
            <person name="Murayama Y."/>
            <person name="Naylor J.W."/>
            <person name="Nicol R."/>
            <person name="Nguyen C."/>
            <person name="O'Leary S.B."/>
            <person name="O'Neill K."/>
            <person name="Parker S.C.J."/>
            <person name="Polley A."/>
            <person name="Raymond C.K."/>
            <person name="Reichwald K."/>
            <person name="Rodriguez J."/>
            <person name="Sasaki T."/>
            <person name="Schilhabel M."/>
            <person name="Siddiqui R."/>
            <person name="Smith C.L."/>
            <person name="Sneddon T.P."/>
            <person name="Talamas J.A."/>
            <person name="Tenzin P."/>
            <person name="Topham K."/>
            <person name="Venkataraman V."/>
            <person name="Wen G."/>
            <person name="Yamazaki S."/>
            <person name="Young S.K."/>
            <person name="Zeng Q."/>
            <person name="Zimmer A.R."/>
            <person name="Rosenthal A."/>
            <person name="Birren B.W."/>
            <person name="Platzer M."/>
            <person name="Shimizu N."/>
            <person name="Lander E.S."/>
        </authorList>
    </citation>
    <scope>NUCLEOTIDE SEQUENCE [LARGE SCALE GENOMIC DNA]</scope>
</reference>
<reference key="2">
    <citation type="journal article" date="2006" name="Cell">
        <title>Global, in vivo, and site-specific phosphorylation dynamics in signaling networks.</title>
        <authorList>
            <person name="Olsen J.V."/>
            <person name="Blagoev B."/>
            <person name="Gnad F."/>
            <person name="Macek B."/>
            <person name="Kumar C."/>
            <person name="Mortensen P."/>
            <person name="Mann M."/>
        </authorList>
    </citation>
    <scope>IDENTIFICATION BY MASS SPECTROMETRY [LARGE SCALE ANALYSIS]</scope>
    <source>
        <tissue>Cervix carcinoma</tissue>
    </source>
</reference>
<reference key="3">
    <citation type="journal article" date="2008" name="Proc. Natl. Acad. Sci. U.S.A.">
        <title>A quantitative atlas of mitotic phosphorylation.</title>
        <authorList>
            <person name="Dephoure N."/>
            <person name="Zhou C."/>
            <person name="Villen J."/>
            <person name="Beausoleil S.A."/>
            <person name="Bakalarski C.E."/>
            <person name="Elledge S.J."/>
            <person name="Gygi S.P."/>
        </authorList>
    </citation>
    <scope>PHOSPHORYLATION [LARGE SCALE ANALYSIS] AT THR-276; SER-278 AND SER-280</scope>
    <scope>IDENTIFICATION BY MASS SPECTROMETRY [LARGE SCALE ANALYSIS]</scope>
    <source>
        <tissue>Cervix carcinoma</tissue>
    </source>
</reference>
<reference key="4">
    <citation type="journal article" date="2009" name="Science">
        <title>Lysine acetylation targets protein complexes and co-regulates major cellular functions.</title>
        <authorList>
            <person name="Choudhary C."/>
            <person name="Kumar C."/>
            <person name="Gnad F."/>
            <person name="Nielsen M.L."/>
            <person name="Rehman M."/>
            <person name="Walther T.C."/>
            <person name="Olsen J.V."/>
            <person name="Mann M."/>
        </authorList>
    </citation>
    <scope>ACETYLATION [LARGE SCALE ANALYSIS] AT LYS-319</scope>
    <scope>IDENTIFICATION BY MASS SPECTROMETRY [LARGE SCALE ANALYSIS]</scope>
</reference>
<reference key="5">
    <citation type="journal article" date="2010" name="Sci. Signal.">
        <title>Quantitative phosphoproteomics reveals widespread full phosphorylation site occupancy during mitosis.</title>
        <authorList>
            <person name="Olsen J.V."/>
            <person name="Vermeulen M."/>
            <person name="Santamaria A."/>
            <person name="Kumar C."/>
            <person name="Miller M.L."/>
            <person name="Jensen L.J."/>
            <person name="Gnad F."/>
            <person name="Cox J."/>
            <person name="Jensen T.S."/>
            <person name="Nigg E.A."/>
            <person name="Brunak S."/>
            <person name="Mann M."/>
        </authorList>
    </citation>
    <scope>PHOSPHORYLATION [LARGE SCALE ANALYSIS] AT SER-250; SER-254; SER-278 AND SER-638</scope>
    <scope>IDENTIFICATION BY MASS SPECTROMETRY [LARGE SCALE ANALYSIS]</scope>
    <source>
        <tissue>Cervix carcinoma</tissue>
    </source>
</reference>
<reference key="6">
    <citation type="journal article" date="2011" name="Sci. Signal.">
        <title>System-wide temporal characterization of the proteome and phosphoproteome of human embryonic stem cell differentiation.</title>
        <authorList>
            <person name="Rigbolt K.T."/>
            <person name="Prokhorova T.A."/>
            <person name="Akimov V."/>
            <person name="Henningsen J."/>
            <person name="Johansen P.T."/>
            <person name="Kratchmarova I."/>
            <person name="Kassem M."/>
            <person name="Mann M."/>
            <person name="Olsen J.V."/>
            <person name="Blagoev B."/>
        </authorList>
    </citation>
    <scope>PHOSPHORYLATION [LARGE SCALE ANALYSIS] AT SER-278; SER-280; SER-638 AND THR-640</scope>
    <scope>IDENTIFICATION BY MASS SPECTROMETRY [LARGE SCALE ANALYSIS]</scope>
</reference>
<reference key="7">
    <citation type="journal article" date="2013" name="J. Proteome Res.">
        <title>Toward a comprehensive characterization of a human cancer cell phosphoproteome.</title>
        <authorList>
            <person name="Zhou H."/>
            <person name="Di Palma S."/>
            <person name="Preisinger C."/>
            <person name="Peng M."/>
            <person name="Polat A.N."/>
            <person name="Heck A.J."/>
            <person name="Mohammed S."/>
        </authorList>
    </citation>
    <scope>PHOSPHORYLATION [LARGE SCALE ANALYSIS] AT SER-98; SER-101; SER-278; SER-280; SER-292; SER-294; SER-377; SER-575 AND SER-591</scope>
    <scope>IDENTIFICATION BY MASS SPECTROMETRY [LARGE SCALE ANALYSIS]</scope>
    <source>
        <tissue>Cervix carcinoma</tissue>
        <tissue>Erythroleukemia</tissue>
    </source>
</reference>
<reference key="8">
    <citation type="journal article" date="2014" name="J. Proteomics">
        <title>An enzyme assisted RP-RPLC approach for in-depth analysis of human liver phosphoproteome.</title>
        <authorList>
            <person name="Bian Y."/>
            <person name="Song C."/>
            <person name="Cheng K."/>
            <person name="Dong M."/>
            <person name="Wang F."/>
            <person name="Huang J."/>
            <person name="Sun D."/>
            <person name="Wang L."/>
            <person name="Ye M."/>
            <person name="Zou H."/>
        </authorList>
    </citation>
    <scope>PHOSPHORYLATION [LARGE SCALE ANALYSIS] AT SER-112; SER-575; SER-710 AND SER-718</scope>
    <scope>IDENTIFICATION BY MASS SPECTROMETRY [LARGE SCALE ANALYSIS]</scope>
    <source>
        <tissue>Liver</tissue>
    </source>
</reference>
<reference key="9">
    <citation type="journal article" date="2014" name="Nat. Struct. Mol. Biol.">
        <title>Uncovering global SUMOylation signaling networks in a site-specific manner.</title>
        <authorList>
            <person name="Hendriks I.A."/>
            <person name="D'Souza R.C."/>
            <person name="Yang B."/>
            <person name="Verlaan-de Vries M."/>
            <person name="Mann M."/>
            <person name="Vertegaal A.C."/>
        </authorList>
    </citation>
    <scope>SUMOYLATION [LARGE SCALE ANALYSIS] AT LYS-151</scope>
    <scope>IDENTIFICATION BY MASS SPECTROMETRY [LARGE SCALE ANALYSIS]</scope>
</reference>
<reference key="10">
    <citation type="journal article" date="2015" name="Cell Rep.">
        <title>SUMO-2 orchestrates chromatin modifiers in response to DNA damage.</title>
        <authorList>
            <person name="Hendriks I.A."/>
            <person name="Treffers L.W."/>
            <person name="Verlaan-de Vries M."/>
            <person name="Olsen J.V."/>
            <person name="Vertegaal A.C."/>
        </authorList>
    </citation>
    <scope>SUMOYLATION [LARGE SCALE ANALYSIS] AT LYS-151</scope>
    <scope>IDENTIFICATION BY MASS SPECTROMETRY [LARGE SCALE ANALYSIS]</scope>
</reference>
<reference key="11">
    <citation type="journal article" date="2015" name="Mol. Cell. Proteomics">
        <title>System-wide analysis of SUMOylation dynamics in response to replication stress reveals novel small ubiquitin-like modified target proteins and acceptor lysines relevant for genome stability.</title>
        <authorList>
            <person name="Xiao Z."/>
            <person name="Chang J.G."/>
            <person name="Hendriks I.A."/>
            <person name="Sigurdsson J.O."/>
            <person name="Olsen J.V."/>
            <person name="Vertegaal A.C."/>
        </authorList>
    </citation>
    <scope>SUMOYLATION [LARGE SCALE ANALYSIS] AT LYS-151</scope>
    <scope>IDENTIFICATION BY MASS SPECTROMETRY [LARGE SCALE ANALYSIS]</scope>
</reference>
<reference key="12">
    <citation type="journal article" date="2017" name="Nat. Struct. Mol. Biol.">
        <title>Site-specific mapping of the human SUMO proteome reveals co-modification with phosphorylation.</title>
        <authorList>
            <person name="Hendriks I.A."/>
            <person name="Lyon D."/>
            <person name="Young C."/>
            <person name="Jensen L.J."/>
            <person name="Vertegaal A.C."/>
            <person name="Nielsen M.L."/>
        </authorList>
    </citation>
    <scope>SUMOYLATION [LARGE SCALE ANALYSIS] AT LYS-114; LYS-151; LYS-335; LYS-514; LYS-541 AND LYS-895</scope>
    <scope>IDENTIFICATION BY MASS SPECTROMETRY [LARGE SCALE ANALYSIS]</scope>
</reference>
<evidence type="ECO:0000255" key="1">
    <source>
        <dbReference type="PROSITE-ProRule" id="PRU00176"/>
    </source>
</evidence>
<evidence type="ECO:0000256" key="2">
    <source>
        <dbReference type="SAM" id="MobiDB-lite"/>
    </source>
</evidence>
<evidence type="ECO:0007744" key="3">
    <source>
    </source>
</evidence>
<evidence type="ECO:0007744" key="4">
    <source>
    </source>
</evidence>
<evidence type="ECO:0007744" key="5">
    <source>
    </source>
</evidence>
<evidence type="ECO:0007744" key="6">
    <source>
    </source>
</evidence>
<evidence type="ECO:0007744" key="7">
    <source>
    </source>
</evidence>
<evidence type="ECO:0007744" key="8">
    <source>
    </source>
</evidence>
<evidence type="ECO:0007744" key="9">
    <source>
    </source>
</evidence>
<evidence type="ECO:0007744" key="10">
    <source>
    </source>
</evidence>
<evidence type="ECO:0007744" key="11">
    <source>
    </source>
</evidence>
<evidence type="ECO:0007744" key="12">
    <source>
    </source>
</evidence>
<accession>Q8IXT5</accession>
<accession>A8MYB5</accession>
<sequence>MAVVIRLLGLPFIAGPVDIRHFFTGLTIPDGGVHIIGGEIGEAFIIFATDEDARRAISRSGGFIKDSSVELFLSSKAEMQKTIEMKRTDRVGRGRPGSGTSGVDSLSNFIESVKEEASNSGYGSSINQDAGFHTNGTGHGNLRPRKTRPLKAENPYLFLRGLPYLVNEDDVRVFFSGLCVDGVIFLKHHDGRNNGDAIVKFASCVDASGGLKCHRSFMGSRFIEVMQGSEQQWIEFGGNAVKEGDVLRRSEEHSPPRGINDRHFRKRSHSKSPRRTRSRSPLGFYVHLKNLSLSIDERDLRNFFRGTDLTDEQIRFLYKDENRTRYAFVMFKTLKDYNTALSLHKTVLQYRPVHIDPISRKQMLKFIARYEKKRSGSLERDRPGHVSQKYSQEGNSGQKLCIYIRNFPFDVTKVEVQKFFADFLLAEDDIYLLYDDKGVGLGEALVKFKSEEQAMKAERLNRRRFLGTEVLLRLISEAQIQEFGVNFSVMSSEKMQARSQSRERGDHSHLFDSKDPPIYSVGAFENFRHQLEDLRQLDNFKHPQRDFRQPDRHPPEDFRHSSEDFRFPPEDFRHSPEDFRRPREEDFRRPSEEDFRRPWEEDFRRPPEDDFRHPREEDWRRPLEEDWRRPLEEDFRRSPTEDFRQLPEEDFRQPPEEDLRWLPEEDFRRPPEEDWRRPPEEDFRRPLQGEWRRPPEDDFRRPPEEDFRHSPEEDFRQSPQEHFRRPPQEHFRRPPPEHFRRPPPEHFRRPPPEHFRRPPPEHFRRPPPEHFRRPPPEHFRRPPQEHFRRPPQEHFRRSREEDFRHPPDEDFRGPPDEDFRHPPDEDFRSPQEEDFRCPSDEDFRQLPEEDLREAPEEDPRLPDNFRPPGEDFRSPPDDFRSHRPFVNFGRPEGGKFDFGKHNMGSFPEGRFMPDPKINCGSGRVTPIKIMNLPFKANVNEILDFFHGYRIIPDSVSIQYNEQGLPTGEAIVAMINYNEAMAAIKDLNDRPVGPRKVKLTLL</sequence>
<comment type="interaction">
    <interactant intactId="EBI-3044077">
        <id>Q8IXT5</id>
    </interactant>
    <interactant intactId="EBI-766279">
        <id>O00555</id>
        <label>CACNA1A</label>
    </interactant>
    <organismsDiffer>false</organismsDiffer>
    <experiments>2</experiments>
</comment>
<dbReference type="EMBL" id="AC010834">
    <property type="status" value="NOT_ANNOTATED_CDS"/>
    <property type="molecule type" value="Genomic_DNA"/>
</dbReference>
<dbReference type="CCDS" id="CCDS43755.1"/>
<dbReference type="RefSeq" id="NP_001364889.1">
    <property type="nucleotide sequence ID" value="NM_001377960.1"/>
</dbReference>
<dbReference type="RefSeq" id="NP_001364890.1">
    <property type="nucleotide sequence ID" value="NM_001377961.1"/>
</dbReference>
<dbReference type="RefSeq" id="NP_001364891.1">
    <property type="nucleotide sequence ID" value="NM_001377962.1"/>
</dbReference>
<dbReference type="RefSeq" id="NP_001364892.1">
    <property type="nucleotide sequence ID" value="NM_001377963.1"/>
</dbReference>
<dbReference type="RefSeq" id="NP_001364893.1">
    <property type="nucleotide sequence ID" value="NM_001377964.1"/>
</dbReference>
<dbReference type="RefSeq" id="NP_976324.2">
    <property type="nucleotide sequence ID" value="NM_203390.4"/>
</dbReference>
<dbReference type="RefSeq" id="XP_005250972.1">
    <property type="nucleotide sequence ID" value="XM_005250915.4"/>
</dbReference>
<dbReference type="RefSeq" id="XP_011515329.1">
    <property type="nucleotide sequence ID" value="XM_011517027.2"/>
</dbReference>
<dbReference type="RefSeq" id="XP_011515330.1">
    <property type="nucleotide sequence ID" value="XM_011517028.2"/>
</dbReference>
<dbReference type="RefSeq" id="XP_011515331.1">
    <property type="nucleotide sequence ID" value="XM_011517029.3"/>
</dbReference>
<dbReference type="RefSeq" id="XP_016868895.1">
    <property type="nucleotide sequence ID" value="XM_017013406.1"/>
</dbReference>
<dbReference type="RefSeq" id="XP_016868896.1">
    <property type="nucleotide sequence ID" value="XM_017013407.1"/>
</dbReference>
<dbReference type="RefSeq" id="XP_016868897.1">
    <property type="nucleotide sequence ID" value="XM_017013408.3"/>
</dbReference>
<dbReference type="RefSeq" id="XP_047277726.1">
    <property type="nucleotide sequence ID" value="XM_047421770.1"/>
</dbReference>
<dbReference type="RefSeq" id="XP_047277727.1">
    <property type="nucleotide sequence ID" value="XM_047421771.1"/>
</dbReference>
<dbReference type="RefSeq" id="XP_047277728.1">
    <property type="nucleotide sequence ID" value="XM_047421772.1"/>
</dbReference>
<dbReference type="RefSeq" id="XP_047277729.1">
    <property type="nucleotide sequence ID" value="XM_047421773.1"/>
</dbReference>
<dbReference type="RefSeq" id="XP_047277730.1">
    <property type="nucleotide sequence ID" value="XM_047421774.1"/>
</dbReference>
<dbReference type="RefSeq" id="XP_047277731.1">
    <property type="nucleotide sequence ID" value="XM_047421775.1"/>
</dbReference>
<dbReference type="RefSeq" id="XP_047277732.1">
    <property type="nucleotide sequence ID" value="XM_047421776.1"/>
</dbReference>
<dbReference type="RefSeq" id="XP_054216437.1">
    <property type="nucleotide sequence ID" value="XM_054360462.1"/>
</dbReference>
<dbReference type="RefSeq" id="XP_054216438.1">
    <property type="nucleotide sequence ID" value="XM_054360463.1"/>
</dbReference>
<dbReference type="RefSeq" id="XP_054216439.1">
    <property type="nucleotide sequence ID" value="XM_054360464.1"/>
</dbReference>
<dbReference type="RefSeq" id="XP_054216440.1">
    <property type="nucleotide sequence ID" value="XM_054360465.1"/>
</dbReference>
<dbReference type="RefSeq" id="XP_054216441.1">
    <property type="nucleotide sequence ID" value="XM_054360466.1"/>
</dbReference>
<dbReference type="RefSeq" id="XP_054216442.1">
    <property type="nucleotide sequence ID" value="XM_054360467.1"/>
</dbReference>
<dbReference type="RefSeq" id="XP_054216443.1">
    <property type="nucleotide sequence ID" value="XM_054360468.1"/>
</dbReference>
<dbReference type="RefSeq" id="XP_054216444.1">
    <property type="nucleotide sequence ID" value="XM_054360469.1"/>
</dbReference>
<dbReference type="BioGRID" id="133227">
    <property type="interactions" value="95"/>
</dbReference>
<dbReference type="FunCoup" id="Q8IXT5">
    <property type="interactions" value="2399"/>
</dbReference>
<dbReference type="IntAct" id="Q8IXT5">
    <property type="interactions" value="38"/>
</dbReference>
<dbReference type="MINT" id="Q8IXT5"/>
<dbReference type="STRING" id="9606.ENSP00000382239"/>
<dbReference type="GlyGen" id="Q8IXT5">
    <property type="glycosylation" value="3 sites, 1 N-linked glycan (2 sites), 1 O-linked glycan (1 site)"/>
</dbReference>
<dbReference type="iPTMnet" id="Q8IXT5"/>
<dbReference type="PhosphoSitePlus" id="Q8IXT5"/>
<dbReference type="SwissPalm" id="Q8IXT5"/>
<dbReference type="BioMuta" id="RBM12B"/>
<dbReference type="DMDM" id="215273872"/>
<dbReference type="jPOST" id="Q8IXT5"/>
<dbReference type="MassIVE" id="Q8IXT5"/>
<dbReference type="PaxDb" id="9606-ENSP00000382239"/>
<dbReference type="PeptideAtlas" id="Q8IXT5"/>
<dbReference type="ProteomicsDB" id="71064"/>
<dbReference type="Pumba" id="Q8IXT5"/>
<dbReference type="Antibodypedia" id="6688">
    <property type="antibodies" value="56 antibodies from 17 providers"/>
</dbReference>
<dbReference type="DNASU" id="389677"/>
<dbReference type="Ensembl" id="ENST00000399300.7">
    <property type="protein sequence ID" value="ENSP00000382239.2"/>
    <property type="gene ID" value="ENSG00000183808.12"/>
</dbReference>
<dbReference type="Ensembl" id="ENST00000517700.6">
    <property type="protein sequence ID" value="ENSP00000427729.2"/>
    <property type="gene ID" value="ENSG00000183808.12"/>
</dbReference>
<dbReference type="Ensembl" id="ENST00000518597.2">
    <property type="protein sequence ID" value="ENSP00000428269.2"/>
    <property type="gene ID" value="ENSG00000183808.12"/>
</dbReference>
<dbReference type="Ensembl" id="ENST00000519109.6">
    <property type="protein sequence ID" value="ENSP00000430474.2"/>
    <property type="gene ID" value="ENSG00000183808.12"/>
</dbReference>
<dbReference type="Ensembl" id="ENST00000520560.6">
    <property type="protein sequence ID" value="ENSP00000429807.2"/>
    <property type="gene ID" value="ENSG00000183808.12"/>
</dbReference>
<dbReference type="GeneID" id="389677"/>
<dbReference type="KEGG" id="hsa:389677"/>
<dbReference type="MANE-Select" id="ENST00000520560.6">
    <property type="protein sequence ID" value="ENSP00000429807.2"/>
    <property type="RefSeq nucleotide sequence ID" value="NM_001377960.1"/>
    <property type="RefSeq protein sequence ID" value="NP_001364889.1"/>
</dbReference>
<dbReference type="UCSC" id="uc003yfz.5">
    <property type="organism name" value="human"/>
</dbReference>
<dbReference type="AGR" id="HGNC:32310"/>
<dbReference type="CTD" id="389677"/>
<dbReference type="DisGeNET" id="389677"/>
<dbReference type="GeneCards" id="RBM12B"/>
<dbReference type="HGNC" id="HGNC:32310">
    <property type="gene designation" value="RBM12B"/>
</dbReference>
<dbReference type="HPA" id="ENSG00000183808">
    <property type="expression patterns" value="Low tissue specificity"/>
</dbReference>
<dbReference type="neXtProt" id="NX_Q8IXT5"/>
<dbReference type="OpenTargets" id="ENSG00000183808"/>
<dbReference type="PharmGKB" id="PA142671098"/>
<dbReference type="VEuPathDB" id="HostDB:ENSG00000183808"/>
<dbReference type="eggNOG" id="KOG4307">
    <property type="taxonomic scope" value="Eukaryota"/>
</dbReference>
<dbReference type="GeneTree" id="ENSGT00940000158322"/>
<dbReference type="InParanoid" id="Q8IXT5"/>
<dbReference type="OMA" id="FRHPPDR"/>
<dbReference type="OrthoDB" id="2588702at2759"/>
<dbReference type="PAN-GO" id="Q8IXT5">
    <property type="GO annotations" value="4 GO annotations based on evolutionary models"/>
</dbReference>
<dbReference type="PhylomeDB" id="Q8IXT5"/>
<dbReference type="TreeFam" id="TF331899"/>
<dbReference type="PathwayCommons" id="Q8IXT5"/>
<dbReference type="SignaLink" id="Q8IXT5"/>
<dbReference type="BioGRID-ORCS" id="389677">
    <property type="hits" value="23 hits in 1153 CRISPR screens"/>
</dbReference>
<dbReference type="CD-CODE" id="DEE660B4">
    <property type="entry name" value="Stress granule"/>
</dbReference>
<dbReference type="ChiTaRS" id="RBM12B">
    <property type="organism name" value="human"/>
</dbReference>
<dbReference type="GenomeRNAi" id="389677"/>
<dbReference type="Pharos" id="Q8IXT5">
    <property type="development level" value="Tdark"/>
</dbReference>
<dbReference type="PRO" id="PR:Q8IXT5"/>
<dbReference type="Proteomes" id="UP000005640">
    <property type="component" value="Chromosome 8"/>
</dbReference>
<dbReference type="RNAct" id="Q8IXT5">
    <property type="molecule type" value="protein"/>
</dbReference>
<dbReference type="Bgee" id="ENSG00000183808">
    <property type="expression patterns" value="Expressed in calcaneal tendon and 193 other cell types or tissues"/>
</dbReference>
<dbReference type="ExpressionAtlas" id="Q8IXT5">
    <property type="expression patterns" value="baseline and differential"/>
</dbReference>
<dbReference type="GO" id="GO:0005654">
    <property type="term" value="C:nucleoplasm"/>
    <property type="evidence" value="ECO:0000318"/>
    <property type="project" value="GO_Central"/>
</dbReference>
<dbReference type="GO" id="GO:1990904">
    <property type="term" value="C:ribonucleoprotein complex"/>
    <property type="evidence" value="ECO:0000318"/>
    <property type="project" value="GO_Central"/>
</dbReference>
<dbReference type="GO" id="GO:0003723">
    <property type="term" value="F:RNA binding"/>
    <property type="evidence" value="ECO:0007005"/>
    <property type="project" value="UniProtKB"/>
</dbReference>
<dbReference type="GO" id="GO:0043484">
    <property type="term" value="P:regulation of RNA splicing"/>
    <property type="evidence" value="ECO:0000318"/>
    <property type="project" value="GO_Central"/>
</dbReference>
<dbReference type="CDD" id="cd12744">
    <property type="entry name" value="RRM1_RBM12B"/>
    <property type="match status" value="1"/>
</dbReference>
<dbReference type="CDD" id="cd12746">
    <property type="entry name" value="RRM2_RBM12B"/>
    <property type="match status" value="1"/>
</dbReference>
<dbReference type="CDD" id="cd12513">
    <property type="entry name" value="RRM3_RBM12B"/>
    <property type="match status" value="1"/>
</dbReference>
<dbReference type="CDD" id="cd12748">
    <property type="entry name" value="RRM4_RBM12B"/>
    <property type="match status" value="1"/>
</dbReference>
<dbReference type="CDD" id="cd12750">
    <property type="entry name" value="RRM5_RBM12B"/>
    <property type="match status" value="1"/>
</dbReference>
<dbReference type="FunFam" id="3.30.70.330:FF:000193">
    <property type="entry name" value="RNA-binding motif protein 12"/>
    <property type="match status" value="1"/>
</dbReference>
<dbReference type="FunFam" id="3.30.70.330:FF:000489">
    <property type="entry name" value="RNA-binding protein 12B"/>
    <property type="match status" value="1"/>
</dbReference>
<dbReference type="Gene3D" id="3.30.70.330">
    <property type="match status" value="5"/>
</dbReference>
<dbReference type="InterPro" id="IPR050666">
    <property type="entry name" value="ESRP"/>
</dbReference>
<dbReference type="InterPro" id="IPR012677">
    <property type="entry name" value="Nucleotide-bd_a/b_plait_sf"/>
</dbReference>
<dbReference type="InterPro" id="IPR035979">
    <property type="entry name" value="RBD_domain_sf"/>
</dbReference>
<dbReference type="InterPro" id="IPR034588">
    <property type="entry name" value="RBM12B_RRM2"/>
</dbReference>
<dbReference type="InterPro" id="IPR034858">
    <property type="entry name" value="RBM12B_RRM3"/>
</dbReference>
<dbReference type="InterPro" id="IPR047188">
    <property type="entry name" value="RRM4_RBM12B"/>
</dbReference>
<dbReference type="InterPro" id="IPR000504">
    <property type="entry name" value="RRM_dom"/>
</dbReference>
<dbReference type="PANTHER" id="PTHR13976">
    <property type="entry name" value="HETEROGENEOUS NUCLEAR RIBONUCLEOPROTEIN-RELATED"/>
    <property type="match status" value="1"/>
</dbReference>
<dbReference type="Pfam" id="PF00076">
    <property type="entry name" value="RRM_1"/>
    <property type="match status" value="3"/>
</dbReference>
<dbReference type="SMART" id="SM00360">
    <property type="entry name" value="RRM"/>
    <property type="match status" value="5"/>
</dbReference>
<dbReference type="SUPFAM" id="SSF54928">
    <property type="entry name" value="RNA-binding domain, RBD"/>
    <property type="match status" value="4"/>
</dbReference>
<dbReference type="PROSITE" id="PS50102">
    <property type="entry name" value="RRM"/>
    <property type="match status" value="4"/>
</dbReference>
<feature type="chain" id="PRO_0000273366" description="RNA-binding protein 12B">
    <location>
        <begin position="1"/>
        <end position="1001"/>
    </location>
</feature>
<feature type="domain" description="RRM 1" evidence="1">
    <location>
        <begin position="155"/>
        <end position="230"/>
    </location>
</feature>
<feature type="domain" description="RRM 2" evidence="1">
    <location>
        <begin position="284"/>
        <end position="360"/>
    </location>
</feature>
<feature type="domain" description="RRM 3" evidence="1">
    <location>
        <begin position="400"/>
        <end position="477"/>
    </location>
</feature>
<feature type="domain" description="RRM 4" evidence="1">
    <location>
        <begin position="925"/>
        <end position="1001"/>
    </location>
</feature>
<feature type="region of interest" description="Disordered" evidence="2">
    <location>
        <begin position="119"/>
        <end position="147"/>
    </location>
</feature>
<feature type="region of interest" description="Disordered" evidence="2">
    <location>
        <begin position="247"/>
        <end position="278"/>
    </location>
</feature>
<feature type="region of interest" description="Disordered" evidence="2">
    <location>
        <begin position="544"/>
        <end position="587"/>
    </location>
</feature>
<feature type="region of interest" description="Disordered" evidence="2">
    <location>
        <begin position="631"/>
        <end position="882"/>
    </location>
</feature>
<feature type="compositionally biased region" description="Polar residues" evidence="2">
    <location>
        <begin position="119"/>
        <end position="128"/>
    </location>
</feature>
<feature type="compositionally biased region" description="Basic and acidic residues" evidence="2">
    <location>
        <begin position="247"/>
        <end position="262"/>
    </location>
</feature>
<feature type="compositionally biased region" description="Basic residues" evidence="2">
    <location>
        <begin position="263"/>
        <end position="278"/>
    </location>
</feature>
<feature type="compositionally biased region" description="Basic and acidic residues" evidence="2">
    <location>
        <begin position="631"/>
        <end position="881"/>
    </location>
</feature>
<feature type="modified residue" description="Phosphoserine" evidence="7">
    <location>
        <position position="98"/>
    </location>
</feature>
<feature type="modified residue" description="Phosphoserine" evidence="7">
    <location>
        <position position="101"/>
    </location>
</feature>
<feature type="modified residue" description="Phosphoserine" evidence="8">
    <location>
        <position position="112"/>
    </location>
</feature>
<feature type="modified residue" description="Phosphoserine" evidence="5">
    <location>
        <position position="250"/>
    </location>
</feature>
<feature type="modified residue" description="Phosphoserine" evidence="5">
    <location>
        <position position="254"/>
    </location>
</feature>
<feature type="modified residue" description="Phosphothreonine" evidence="3">
    <location>
        <position position="276"/>
    </location>
</feature>
<feature type="modified residue" description="Phosphoserine" evidence="3 5 6 7">
    <location>
        <position position="278"/>
    </location>
</feature>
<feature type="modified residue" description="Phosphoserine" evidence="3 6 7">
    <location>
        <position position="280"/>
    </location>
</feature>
<feature type="modified residue" description="Phosphoserine" evidence="7">
    <location>
        <position position="292"/>
    </location>
</feature>
<feature type="modified residue" description="Phosphoserine" evidence="7">
    <location>
        <position position="294"/>
    </location>
</feature>
<feature type="modified residue" description="N6-acetyllysine" evidence="4">
    <location>
        <position position="319"/>
    </location>
</feature>
<feature type="modified residue" description="Phosphoserine" evidence="7">
    <location>
        <position position="377"/>
    </location>
</feature>
<feature type="modified residue" description="Phosphoserine" evidence="7 8">
    <location>
        <position position="575"/>
    </location>
</feature>
<feature type="modified residue" description="Phosphoserine" evidence="7">
    <location>
        <position position="591"/>
    </location>
</feature>
<feature type="modified residue" description="Phosphoserine" evidence="5 6">
    <location>
        <position position="638"/>
    </location>
</feature>
<feature type="modified residue" description="Phosphothreonine" evidence="6">
    <location>
        <position position="640"/>
    </location>
</feature>
<feature type="modified residue" description="Phosphoserine" evidence="8">
    <location>
        <position position="710"/>
    </location>
</feature>
<feature type="modified residue" description="Phosphoserine" evidence="8">
    <location>
        <position position="718"/>
    </location>
</feature>
<feature type="cross-link" description="Glycyl lysine isopeptide (Lys-Gly) (interchain with G-Cter in SUMO2)" evidence="12">
    <location>
        <position position="114"/>
    </location>
</feature>
<feature type="cross-link" description="Glycyl lysine isopeptide (Lys-Gly) (interchain with G-Cter in SUMO2)" evidence="9 10 11 12">
    <location>
        <position position="151"/>
    </location>
</feature>
<feature type="cross-link" description="Glycyl lysine isopeptide (Lys-Gly) (interchain with G-Cter in SUMO2)" evidence="12">
    <location>
        <position position="335"/>
    </location>
</feature>
<feature type="cross-link" description="Glycyl lysine isopeptide (Lys-Gly) (interchain with G-Cter in SUMO2)" evidence="12">
    <location>
        <position position="514"/>
    </location>
</feature>
<feature type="cross-link" description="Glycyl lysine isopeptide (Lys-Gly) (interchain with G-Cter in SUMO2)" evidence="12">
    <location>
        <position position="541"/>
    </location>
</feature>
<feature type="cross-link" description="Glycyl lysine isopeptide (Lys-Gly) (interchain with G-Cter in SUMO2)" evidence="12">
    <location>
        <position position="895"/>
    </location>
</feature>
<feature type="sequence variant" id="VAR_047291" description="In dbSNP:rs17853906.">
    <original>S</original>
    <variation>F</variation>
    <location>
        <position position="250"/>
    </location>
</feature>
<feature type="sequence variant" id="VAR_047292" description="In dbSNP:rs17857188.">
    <original>R</original>
    <variation>C</variation>
    <location>
        <position position="605"/>
    </location>
</feature>
<feature type="sequence variant" id="VAR_052219" description="In dbSNP:rs16916188.">
    <original>N</original>
    <variation>H</variation>
    <location>
        <position position="864"/>
    </location>
</feature>
<name>RB12B_HUMAN</name>
<organism>
    <name type="scientific">Homo sapiens</name>
    <name type="common">Human</name>
    <dbReference type="NCBI Taxonomy" id="9606"/>
    <lineage>
        <taxon>Eukaryota</taxon>
        <taxon>Metazoa</taxon>
        <taxon>Chordata</taxon>
        <taxon>Craniata</taxon>
        <taxon>Vertebrata</taxon>
        <taxon>Euteleostomi</taxon>
        <taxon>Mammalia</taxon>
        <taxon>Eutheria</taxon>
        <taxon>Euarchontoglires</taxon>
        <taxon>Primates</taxon>
        <taxon>Haplorrhini</taxon>
        <taxon>Catarrhini</taxon>
        <taxon>Hominidae</taxon>
        <taxon>Homo</taxon>
    </lineage>
</organism>
<keyword id="KW-0007">Acetylation</keyword>
<keyword id="KW-1017">Isopeptide bond</keyword>
<keyword id="KW-0597">Phosphoprotein</keyword>
<keyword id="KW-1267">Proteomics identification</keyword>
<keyword id="KW-1185">Reference proteome</keyword>
<keyword id="KW-0677">Repeat</keyword>
<keyword id="KW-0694">RNA-binding</keyword>
<keyword id="KW-0832">Ubl conjugation</keyword>
<protein>
    <recommendedName>
        <fullName>RNA-binding protein 12B</fullName>
    </recommendedName>
    <alternativeName>
        <fullName>RNA-binding motif protein 12B</fullName>
    </alternativeName>
</protein>
<gene>
    <name type="primary">RBM12B</name>
</gene>
<proteinExistence type="evidence at protein level"/>